<comment type="function">
    <text evidence="1">Has no antimicrobial or anticancer activity.</text>
</comment>
<comment type="subcellular location">
    <subcellularLocation>
        <location>Secreted</location>
    </subcellularLocation>
</comment>
<comment type="tissue specificity">
    <text>Expressed by the skin dorsal glands.</text>
</comment>
<comment type="similarity">
    <text evidence="2">Belongs to the frog skin active peptide (FSAP) family. Aurein subfamily.</text>
</comment>
<name>AUR43_RANAE</name>
<keyword id="KW-0878">Amphibian defense peptide</keyword>
<keyword id="KW-0903">Direct protein sequencing</keyword>
<keyword id="KW-0964">Secreted</keyword>
<organism>
    <name type="scientific">Ranoidea aurea</name>
    <name type="common">Green and golden bell frog</name>
    <name type="synonym">Litoria aurea</name>
    <dbReference type="NCBI Taxonomy" id="8371"/>
    <lineage>
        <taxon>Eukaryota</taxon>
        <taxon>Metazoa</taxon>
        <taxon>Chordata</taxon>
        <taxon>Craniata</taxon>
        <taxon>Vertebrata</taxon>
        <taxon>Euteleostomi</taxon>
        <taxon>Amphibia</taxon>
        <taxon>Batrachia</taxon>
        <taxon>Anura</taxon>
        <taxon>Neobatrachia</taxon>
        <taxon>Hyloidea</taxon>
        <taxon>Hylidae</taxon>
        <taxon>Pelodryadinae</taxon>
        <taxon>Ranoidea</taxon>
    </lineage>
</organism>
<evidence type="ECO:0000269" key="1">
    <source>
    </source>
</evidence>
<evidence type="ECO:0000305" key="2"/>
<feature type="peptide" id="PRO_0000043729" description="Aurein-4.3">
    <location>
        <begin position="1"/>
        <end position="23"/>
    </location>
</feature>
<sequence>GLLQTITEKLKEFAGGLVTGVQS</sequence>
<protein>
    <recommendedName>
        <fullName>Aurein-4.3</fullName>
    </recommendedName>
</protein>
<accession>P82399</accession>
<reference key="1">
    <citation type="journal article" date="2000" name="Eur. J. Biochem.">
        <title>The antibiotic and anticancer active aurein peptides from the australian bell frogs Litoria aurea and Litoria raniformis the solution structure of aurein 1.2.</title>
        <authorList>
            <person name="Rozek T."/>
            <person name="Wegener K.L."/>
            <person name="Bowie J.H."/>
            <person name="Olver I.N."/>
            <person name="Carver J.A."/>
            <person name="Wallace J.C."/>
            <person name="Tyler M.J."/>
        </authorList>
    </citation>
    <scope>PROTEIN SEQUENCE</scope>
    <scope>FUNCTION</scope>
    <source>
        <tissue>Skin secretion</tissue>
    </source>
</reference>
<dbReference type="GO" id="GO:0005576">
    <property type="term" value="C:extracellular region"/>
    <property type="evidence" value="ECO:0007669"/>
    <property type="project" value="UniProtKB-SubCell"/>
</dbReference>
<dbReference type="GO" id="GO:0016714">
    <property type="term" value="F:oxidoreductase activity, acting on paired donors, with incorporation or reduction of molecular oxygen, reduced pteridine as one donor, and incorporation of one atom of oxygen"/>
    <property type="evidence" value="ECO:0007669"/>
    <property type="project" value="InterPro"/>
</dbReference>
<dbReference type="GO" id="GO:0006952">
    <property type="term" value="P:defense response"/>
    <property type="evidence" value="ECO:0007669"/>
    <property type="project" value="UniProtKB-KW"/>
</dbReference>
<dbReference type="InterPro" id="IPR019774">
    <property type="entry name" value="Aromatic-AA_hydroxylase_C"/>
</dbReference>
<dbReference type="PROSITE" id="PS51410">
    <property type="entry name" value="BH4_AAA_HYDROXYL_2"/>
    <property type="match status" value="1"/>
</dbReference>
<proteinExistence type="evidence at protein level"/>